<keyword id="KW-0456">Lyase</keyword>
<keyword id="KW-0672">Quinate metabolism</keyword>
<keyword id="KW-1185">Reference proteome</keyword>
<evidence type="ECO:0000255" key="1">
    <source>
        <dbReference type="HAMAP-Rule" id="MF_03136"/>
    </source>
</evidence>
<organism>
    <name type="scientific">Scheffersomyces stipitis (strain ATCC 58785 / CBS 6054 / NBRC 10063 / NRRL Y-11545)</name>
    <name type="common">Yeast</name>
    <name type="synonym">Pichia stipitis</name>
    <dbReference type="NCBI Taxonomy" id="322104"/>
    <lineage>
        <taxon>Eukaryota</taxon>
        <taxon>Fungi</taxon>
        <taxon>Dikarya</taxon>
        <taxon>Ascomycota</taxon>
        <taxon>Saccharomycotina</taxon>
        <taxon>Pichiomycetes</taxon>
        <taxon>Debaryomycetaceae</taxon>
        <taxon>Scheffersomyces</taxon>
    </lineage>
</organism>
<gene>
    <name evidence="1" type="primary">DQD1</name>
    <name type="ORF">PICST_62322</name>
</gene>
<name>3DHQ_PICST</name>
<proteinExistence type="inferred from homology"/>
<sequence length="146" mass="16019">MVKKVLLINGPNLNLLGTREPEKYGTTSLKDIEQAAQNQATAKQDGSEVLVYQNNTEGFIIDRIHLAKQEGVGFIIINAGAYTHTSVGIRDALLGTAIPFIEVHITNVHQREPFRHQSYLSDKAVAVICGLGVYGYTASVEYALNY</sequence>
<protein>
    <recommendedName>
        <fullName evidence="1">Catabolic 3-dehydroquinase</fullName>
        <shortName evidence="1">cDHQase</shortName>
        <ecNumber evidence="1">4.2.1.10</ecNumber>
    </recommendedName>
    <alternativeName>
        <fullName evidence="1">3-dehydroquinate dehydratase</fullName>
    </alternativeName>
</protein>
<comment type="function">
    <text evidence="1">Is involved in the catabolism of quinate. Allows the utilization of quinate as carbon source via the beta-ketoadipate pathway.</text>
</comment>
<comment type="catalytic activity">
    <reaction evidence="1">
        <text>3-dehydroquinate = 3-dehydroshikimate + H2O</text>
        <dbReference type="Rhea" id="RHEA:21096"/>
        <dbReference type="ChEBI" id="CHEBI:15377"/>
        <dbReference type="ChEBI" id="CHEBI:16630"/>
        <dbReference type="ChEBI" id="CHEBI:32364"/>
        <dbReference type="EC" id="4.2.1.10"/>
    </reaction>
</comment>
<comment type="pathway">
    <text evidence="1">Aromatic compound metabolism; 3,4-dihydroxybenzoate biosynthesis; 3,4-dihydroxybenzoate from 3-dehydroquinate: step 1/2.</text>
</comment>
<comment type="subunit">
    <text evidence="1">Homododecamer. Adopts a ring-like structure, composed of an arrangement of two hexameric rings stacked on top of one another.</text>
</comment>
<comment type="similarity">
    <text evidence="1">Belongs to the type-II 3-dehydroquinase family.</text>
</comment>
<reference key="1">
    <citation type="journal article" date="2007" name="Nat. Biotechnol.">
        <title>Genome sequence of the lignocellulose-bioconverting and xylose-fermenting yeast Pichia stipitis.</title>
        <authorList>
            <person name="Jeffries T.W."/>
            <person name="Grigoriev I.V."/>
            <person name="Grimwood J."/>
            <person name="Laplaza J.M."/>
            <person name="Aerts A."/>
            <person name="Salamov A."/>
            <person name="Schmutz J."/>
            <person name="Lindquist E."/>
            <person name="Dehal P."/>
            <person name="Shapiro H."/>
            <person name="Jin Y.-S."/>
            <person name="Passoth V."/>
            <person name="Richardson P.M."/>
        </authorList>
    </citation>
    <scope>NUCLEOTIDE SEQUENCE [LARGE SCALE GENOMIC DNA]</scope>
    <source>
        <strain>ATCC 58785 / CBS 6054 / NBRC 10063 / NRRL Y-11545</strain>
    </source>
</reference>
<feature type="chain" id="PRO_0000402375" description="Catabolic 3-dehydroquinase">
    <location>
        <begin position="1"/>
        <end position="146"/>
    </location>
</feature>
<feature type="active site" description="Proton acceptor" evidence="1">
    <location>
        <position position="24"/>
    </location>
</feature>
<feature type="active site" description="Proton donor" evidence="1">
    <location>
        <position position="104"/>
    </location>
</feature>
<feature type="binding site" evidence="1">
    <location>
        <position position="78"/>
    </location>
    <ligand>
        <name>substrate</name>
    </ligand>
</feature>
<feature type="binding site" evidence="1">
    <location>
        <position position="84"/>
    </location>
    <ligand>
        <name>substrate</name>
    </ligand>
</feature>
<feature type="binding site" evidence="1">
    <location>
        <position position="91"/>
    </location>
    <ligand>
        <name>substrate</name>
    </ligand>
</feature>
<feature type="binding site" evidence="1">
    <location>
        <begin position="105"/>
        <end position="106"/>
    </location>
    <ligand>
        <name>substrate</name>
    </ligand>
</feature>
<feature type="binding site" evidence="1">
    <location>
        <position position="115"/>
    </location>
    <ligand>
        <name>substrate</name>
    </ligand>
</feature>
<feature type="site" description="Transition state stabilizer" evidence="1">
    <location>
        <position position="19"/>
    </location>
</feature>
<accession>A3LYE4</accession>
<dbReference type="EC" id="4.2.1.10" evidence="1"/>
<dbReference type="EMBL" id="CP000500">
    <property type="protein sequence ID" value="ABN67969.1"/>
    <property type="molecule type" value="Genomic_DNA"/>
</dbReference>
<dbReference type="RefSeq" id="XP_001385998.1">
    <property type="nucleotide sequence ID" value="XM_001385961.1"/>
</dbReference>
<dbReference type="SMR" id="A3LYE4"/>
<dbReference type="STRING" id="322104.A3LYE4"/>
<dbReference type="GeneID" id="4840232"/>
<dbReference type="KEGG" id="pic:PICST_62322"/>
<dbReference type="eggNOG" id="ENOG502S1A9">
    <property type="taxonomic scope" value="Eukaryota"/>
</dbReference>
<dbReference type="HOGENOM" id="CLU_090968_1_0_1"/>
<dbReference type="InParanoid" id="A3LYE4"/>
<dbReference type="OMA" id="WIHEAGR"/>
<dbReference type="OrthoDB" id="8191625at2759"/>
<dbReference type="UniPathway" id="UPA00088">
    <property type="reaction ID" value="UER00178"/>
</dbReference>
<dbReference type="Proteomes" id="UP000002258">
    <property type="component" value="Chromosome 6"/>
</dbReference>
<dbReference type="GO" id="GO:0003855">
    <property type="term" value="F:3-dehydroquinate dehydratase activity"/>
    <property type="evidence" value="ECO:0007669"/>
    <property type="project" value="UniProtKB-UniRule"/>
</dbReference>
<dbReference type="GO" id="GO:0046279">
    <property type="term" value="P:3,4-dihydroxybenzoate biosynthetic process"/>
    <property type="evidence" value="ECO:0007669"/>
    <property type="project" value="UniProtKB-UniRule"/>
</dbReference>
<dbReference type="GO" id="GO:0019631">
    <property type="term" value="P:quinate catabolic process"/>
    <property type="evidence" value="ECO:0007669"/>
    <property type="project" value="TreeGrafter"/>
</dbReference>
<dbReference type="CDD" id="cd00466">
    <property type="entry name" value="DHQase_II"/>
    <property type="match status" value="1"/>
</dbReference>
<dbReference type="Gene3D" id="3.40.50.9100">
    <property type="entry name" value="Dehydroquinase, class II"/>
    <property type="match status" value="1"/>
</dbReference>
<dbReference type="HAMAP" id="MF_00169">
    <property type="entry name" value="AroQ"/>
    <property type="match status" value="1"/>
</dbReference>
<dbReference type="InterPro" id="IPR001874">
    <property type="entry name" value="DHquinase_II"/>
</dbReference>
<dbReference type="InterPro" id="IPR018509">
    <property type="entry name" value="DHquinase_II_CS"/>
</dbReference>
<dbReference type="InterPro" id="IPR036441">
    <property type="entry name" value="DHquinase_II_sf"/>
</dbReference>
<dbReference type="NCBIfam" id="TIGR01088">
    <property type="entry name" value="aroQ"/>
    <property type="match status" value="1"/>
</dbReference>
<dbReference type="NCBIfam" id="NF003804">
    <property type="entry name" value="PRK05395.1-1"/>
    <property type="match status" value="1"/>
</dbReference>
<dbReference type="NCBIfam" id="NF003805">
    <property type="entry name" value="PRK05395.1-2"/>
    <property type="match status" value="1"/>
</dbReference>
<dbReference type="NCBIfam" id="NF003806">
    <property type="entry name" value="PRK05395.1-3"/>
    <property type="match status" value="1"/>
</dbReference>
<dbReference type="NCBIfam" id="NF003807">
    <property type="entry name" value="PRK05395.1-4"/>
    <property type="match status" value="1"/>
</dbReference>
<dbReference type="PANTHER" id="PTHR21272">
    <property type="entry name" value="CATABOLIC 3-DEHYDROQUINASE"/>
    <property type="match status" value="1"/>
</dbReference>
<dbReference type="PANTHER" id="PTHR21272:SF3">
    <property type="entry name" value="CATABOLIC 3-DEHYDROQUINASE"/>
    <property type="match status" value="1"/>
</dbReference>
<dbReference type="Pfam" id="PF01220">
    <property type="entry name" value="DHquinase_II"/>
    <property type="match status" value="1"/>
</dbReference>
<dbReference type="PIRSF" id="PIRSF001399">
    <property type="entry name" value="DHquinase_II"/>
    <property type="match status" value="1"/>
</dbReference>
<dbReference type="SUPFAM" id="SSF52304">
    <property type="entry name" value="Type II 3-dehydroquinate dehydratase"/>
    <property type="match status" value="1"/>
</dbReference>
<dbReference type="PROSITE" id="PS01029">
    <property type="entry name" value="DEHYDROQUINASE_II"/>
    <property type="match status" value="1"/>
</dbReference>